<evidence type="ECO:0000255" key="1">
    <source>
        <dbReference type="HAMAP-Rule" id="MF_01350"/>
    </source>
</evidence>
<protein>
    <recommendedName>
        <fullName evidence="1">NADH-quinone oxidoreductase subunit H</fullName>
        <ecNumber evidence="1">7.1.1.-</ecNumber>
    </recommendedName>
    <alternativeName>
        <fullName evidence="1">NADH dehydrogenase I subunit H</fullName>
    </alternativeName>
    <alternativeName>
        <fullName evidence="1">NDH-1 subunit H</fullName>
    </alternativeName>
</protein>
<dbReference type="EC" id="7.1.1.-" evidence="1"/>
<dbReference type="EMBL" id="CU234118">
    <property type="protein sequence ID" value="CAL77929.1"/>
    <property type="molecule type" value="Genomic_DNA"/>
</dbReference>
<dbReference type="RefSeq" id="WP_011927055.1">
    <property type="nucleotide sequence ID" value="NC_009445.1"/>
</dbReference>
<dbReference type="SMR" id="A4YVK3"/>
<dbReference type="STRING" id="114615.BRADO4177"/>
<dbReference type="KEGG" id="bra:BRADO4177"/>
<dbReference type="eggNOG" id="COG1005">
    <property type="taxonomic scope" value="Bacteria"/>
</dbReference>
<dbReference type="HOGENOM" id="CLU_015134_0_1_5"/>
<dbReference type="OrthoDB" id="9803734at2"/>
<dbReference type="Proteomes" id="UP000001994">
    <property type="component" value="Chromosome"/>
</dbReference>
<dbReference type="GO" id="GO:0005886">
    <property type="term" value="C:plasma membrane"/>
    <property type="evidence" value="ECO:0007669"/>
    <property type="project" value="UniProtKB-SubCell"/>
</dbReference>
<dbReference type="GO" id="GO:0003954">
    <property type="term" value="F:NADH dehydrogenase activity"/>
    <property type="evidence" value="ECO:0007669"/>
    <property type="project" value="TreeGrafter"/>
</dbReference>
<dbReference type="GO" id="GO:0016655">
    <property type="term" value="F:oxidoreductase activity, acting on NAD(P)H, quinone or similar compound as acceptor"/>
    <property type="evidence" value="ECO:0007669"/>
    <property type="project" value="UniProtKB-UniRule"/>
</dbReference>
<dbReference type="GO" id="GO:0048038">
    <property type="term" value="F:quinone binding"/>
    <property type="evidence" value="ECO:0007669"/>
    <property type="project" value="UniProtKB-KW"/>
</dbReference>
<dbReference type="GO" id="GO:0009060">
    <property type="term" value="P:aerobic respiration"/>
    <property type="evidence" value="ECO:0007669"/>
    <property type="project" value="TreeGrafter"/>
</dbReference>
<dbReference type="HAMAP" id="MF_01350">
    <property type="entry name" value="NDH1_NuoH"/>
    <property type="match status" value="1"/>
</dbReference>
<dbReference type="InterPro" id="IPR001694">
    <property type="entry name" value="NADH_UbQ_OxRdtase_su1/FPO"/>
</dbReference>
<dbReference type="InterPro" id="IPR018086">
    <property type="entry name" value="NADH_UbQ_OxRdtase_su1_CS"/>
</dbReference>
<dbReference type="NCBIfam" id="NF004745">
    <property type="entry name" value="PRK06076.1-6"/>
    <property type="match status" value="1"/>
</dbReference>
<dbReference type="PANTHER" id="PTHR11432">
    <property type="entry name" value="NADH DEHYDROGENASE SUBUNIT 1"/>
    <property type="match status" value="1"/>
</dbReference>
<dbReference type="PANTHER" id="PTHR11432:SF3">
    <property type="entry name" value="NADH-UBIQUINONE OXIDOREDUCTASE CHAIN 1"/>
    <property type="match status" value="1"/>
</dbReference>
<dbReference type="Pfam" id="PF00146">
    <property type="entry name" value="NADHdh"/>
    <property type="match status" value="1"/>
</dbReference>
<dbReference type="PROSITE" id="PS00668">
    <property type="entry name" value="COMPLEX1_ND1_2"/>
    <property type="match status" value="1"/>
</dbReference>
<keyword id="KW-0997">Cell inner membrane</keyword>
<keyword id="KW-1003">Cell membrane</keyword>
<keyword id="KW-0472">Membrane</keyword>
<keyword id="KW-0520">NAD</keyword>
<keyword id="KW-0874">Quinone</keyword>
<keyword id="KW-1185">Reference proteome</keyword>
<keyword id="KW-1278">Translocase</keyword>
<keyword id="KW-0812">Transmembrane</keyword>
<keyword id="KW-1133">Transmembrane helix</keyword>
<keyword id="KW-0830">Ubiquinone</keyword>
<name>NUOH_BRASO</name>
<reference key="1">
    <citation type="journal article" date="2007" name="Science">
        <title>Legumes symbioses: absence of nod genes in photosynthetic bradyrhizobia.</title>
        <authorList>
            <person name="Giraud E."/>
            <person name="Moulin L."/>
            <person name="Vallenet D."/>
            <person name="Barbe V."/>
            <person name="Cytryn E."/>
            <person name="Avarre J.-C."/>
            <person name="Jaubert M."/>
            <person name="Simon D."/>
            <person name="Cartieaux F."/>
            <person name="Prin Y."/>
            <person name="Bena G."/>
            <person name="Hannibal L."/>
            <person name="Fardoux J."/>
            <person name="Kojadinovic M."/>
            <person name="Vuillet L."/>
            <person name="Lajus A."/>
            <person name="Cruveiller S."/>
            <person name="Rouy Z."/>
            <person name="Mangenot S."/>
            <person name="Segurens B."/>
            <person name="Dossat C."/>
            <person name="Franck W.L."/>
            <person name="Chang W.-S."/>
            <person name="Saunders E."/>
            <person name="Bruce D."/>
            <person name="Richardson P."/>
            <person name="Normand P."/>
            <person name="Dreyfus B."/>
            <person name="Pignol D."/>
            <person name="Stacey G."/>
            <person name="Emerich D."/>
            <person name="Vermeglio A."/>
            <person name="Medigue C."/>
            <person name="Sadowsky M."/>
        </authorList>
    </citation>
    <scope>NUCLEOTIDE SEQUENCE [LARGE SCALE GENOMIC DNA]</scope>
    <source>
        <strain>ORS 278</strain>
    </source>
</reference>
<organism>
    <name type="scientific">Bradyrhizobium sp. (strain ORS 278)</name>
    <dbReference type="NCBI Taxonomy" id="114615"/>
    <lineage>
        <taxon>Bacteria</taxon>
        <taxon>Pseudomonadati</taxon>
        <taxon>Pseudomonadota</taxon>
        <taxon>Alphaproteobacteria</taxon>
        <taxon>Hyphomicrobiales</taxon>
        <taxon>Nitrobacteraceae</taxon>
        <taxon>Bradyrhizobium</taxon>
    </lineage>
</organism>
<accession>A4YVK3</accession>
<feature type="chain" id="PRO_0000298797" description="NADH-quinone oxidoreductase subunit H">
    <location>
        <begin position="1"/>
        <end position="356"/>
    </location>
</feature>
<feature type="transmembrane region" description="Helical" evidence="1">
    <location>
        <begin position="18"/>
        <end position="38"/>
    </location>
</feature>
<feature type="transmembrane region" description="Helical" evidence="1">
    <location>
        <begin position="87"/>
        <end position="107"/>
    </location>
</feature>
<feature type="transmembrane region" description="Helical" evidence="1">
    <location>
        <begin position="120"/>
        <end position="140"/>
    </location>
</feature>
<feature type="transmembrane region" description="Helical" evidence="1">
    <location>
        <begin position="166"/>
        <end position="186"/>
    </location>
</feature>
<feature type="transmembrane region" description="Helical" evidence="1">
    <location>
        <begin position="205"/>
        <end position="225"/>
    </location>
</feature>
<feature type="transmembrane region" description="Helical" evidence="1">
    <location>
        <begin position="265"/>
        <end position="285"/>
    </location>
</feature>
<feature type="transmembrane region" description="Helical" evidence="1">
    <location>
        <begin position="292"/>
        <end position="312"/>
    </location>
</feature>
<feature type="transmembrane region" description="Helical" evidence="1">
    <location>
        <begin position="333"/>
        <end position="353"/>
    </location>
</feature>
<sequence length="356" mass="39069">MADFFASSFWTGFLWPLIIMIAQSVLLLVVLLIAIAYILLADRKIWAAVQIRRGPNVVGPFGLFQSFADLLKFVLKEPIIPAGANKGVFLLAPLVSCVLALAAWAVIPTNLGWAIADINVGILFIFAISSLSIYGIIMAGWSSNSKYPFLAALRSAAQMVSYEVSIGFVIITVLLCAGTLNLSAVVEAQHARGLASLIGLPQLTILNWYVWPLFPMFVVFYVSALAETNRPPFDLVEAESELVAGFMVEYGSTPYLLFMLGEYVAITTMCALATILFLGGWLPPIDVAPFNWVPGVIWFALKLFFMFFLIAMAKAIVPRYRYDQLMRLGWKVFLPLSLVMVVVVAGVLHFAGIAPK</sequence>
<comment type="function">
    <text evidence="1">NDH-1 shuttles electrons from NADH, via FMN and iron-sulfur (Fe-S) centers, to quinones in the respiratory chain. The immediate electron acceptor for the enzyme in this species is believed to be ubiquinone. Couples the redox reaction to proton translocation (for every two electrons transferred, four hydrogen ions are translocated across the cytoplasmic membrane), and thus conserves the redox energy in a proton gradient. This subunit may bind ubiquinone.</text>
</comment>
<comment type="catalytic activity">
    <reaction evidence="1">
        <text>a quinone + NADH + 5 H(+)(in) = a quinol + NAD(+) + 4 H(+)(out)</text>
        <dbReference type="Rhea" id="RHEA:57888"/>
        <dbReference type="ChEBI" id="CHEBI:15378"/>
        <dbReference type="ChEBI" id="CHEBI:24646"/>
        <dbReference type="ChEBI" id="CHEBI:57540"/>
        <dbReference type="ChEBI" id="CHEBI:57945"/>
        <dbReference type="ChEBI" id="CHEBI:132124"/>
    </reaction>
</comment>
<comment type="subunit">
    <text evidence="1">NDH-1 is composed of 14 different subunits. Subunits NuoA, H, J, K, L, M, N constitute the membrane sector of the complex.</text>
</comment>
<comment type="subcellular location">
    <subcellularLocation>
        <location evidence="1">Cell inner membrane</location>
        <topology evidence="1">Multi-pass membrane protein</topology>
    </subcellularLocation>
</comment>
<comment type="similarity">
    <text evidence="1">Belongs to the complex I subunit 1 family.</text>
</comment>
<gene>
    <name evidence="1" type="primary">nuoH</name>
    <name type="ordered locus">BRADO4177</name>
</gene>
<proteinExistence type="inferred from homology"/>